<protein>
    <recommendedName>
        <fullName evidence="1">Phosphatidylglycerol--prolipoprotein diacylglyceryl transferase</fullName>
        <ecNumber evidence="1">2.5.1.145</ecNumber>
    </recommendedName>
</protein>
<gene>
    <name evidence="1" type="primary">lgt</name>
    <name type="ordered locus">MAB_2642c</name>
</gene>
<dbReference type="EC" id="2.5.1.145" evidence="1"/>
<dbReference type="EMBL" id="CU458896">
    <property type="protein sequence ID" value="CAM62722.1"/>
    <property type="molecule type" value="Genomic_DNA"/>
</dbReference>
<dbReference type="RefSeq" id="WP_005075865.1">
    <property type="nucleotide sequence ID" value="NZ_MLCG01000003.1"/>
</dbReference>
<dbReference type="SMR" id="B1MBV1"/>
<dbReference type="GeneID" id="93379573"/>
<dbReference type="KEGG" id="mab:MAB_2642c"/>
<dbReference type="UniPathway" id="UPA00664"/>
<dbReference type="Proteomes" id="UP000007137">
    <property type="component" value="Chromosome"/>
</dbReference>
<dbReference type="GO" id="GO:0005886">
    <property type="term" value="C:plasma membrane"/>
    <property type="evidence" value="ECO:0007669"/>
    <property type="project" value="UniProtKB-SubCell"/>
</dbReference>
<dbReference type="GO" id="GO:0008961">
    <property type="term" value="F:phosphatidylglycerol-prolipoprotein diacylglyceryl transferase activity"/>
    <property type="evidence" value="ECO:0007669"/>
    <property type="project" value="UniProtKB-UniRule"/>
</dbReference>
<dbReference type="GO" id="GO:0042158">
    <property type="term" value="P:lipoprotein biosynthetic process"/>
    <property type="evidence" value="ECO:0007669"/>
    <property type="project" value="UniProtKB-UniRule"/>
</dbReference>
<dbReference type="HAMAP" id="MF_01147">
    <property type="entry name" value="Lgt"/>
    <property type="match status" value="1"/>
</dbReference>
<dbReference type="InterPro" id="IPR001640">
    <property type="entry name" value="Lgt"/>
</dbReference>
<dbReference type="NCBIfam" id="TIGR00544">
    <property type="entry name" value="lgt"/>
    <property type="match status" value="1"/>
</dbReference>
<dbReference type="PANTHER" id="PTHR30589:SF0">
    <property type="entry name" value="PHOSPHATIDYLGLYCEROL--PROLIPOPROTEIN DIACYLGLYCERYL TRANSFERASE"/>
    <property type="match status" value="1"/>
</dbReference>
<dbReference type="PANTHER" id="PTHR30589">
    <property type="entry name" value="PROLIPOPROTEIN DIACYLGLYCERYL TRANSFERASE"/>
    <property type="match status" value="1"/>
</dbReference>
<dbReference type="Pfam" id="PF01790">
    <property type="entry name" value="LGT"/>
    <property type="match status" value="1"/>
</dbReference>
<dbReference type="PROSITE" id="PS01311">
    <property type="entry name" value="LGT"/>
    <property type="match status" value="1"/>
</dbReference>
<name>LGT_MYCA9</name>
<organism>
    <name type="scientific">Mycobacteroides abscessus (strain ATCC 19977 / DSM 44196 / CCUG 20993 / CIP 104536 / JCM 13569 / NCTC 13031 / TMC 1543 / L948)</name>
    <name type="common">Mycobacterium abscessus</name>
    <dbReference type="NCBI Taxonomy" id="561007"/>
    <lineage>
        <taxon>Bacteria</taxon>
        <taxon>Bacillati</taxon>
        <taxon>Actinomycetota</taxon>
        <taxon>Actinomycetes</taxon>
        <taxon>Mycobacteriales</taxon>
        <taxon>Mycobacteriaceae</taxon>
        <taxon>Mycobacteroides</taxon>
        <taxon>Mycobacteroides abscessus</taxon>
    </lineage>
</organism>
<feature type="chain" id="PRO_1000137439" description="Phosphatidylglycerol--prolipoprotein diacylglyceryl transferase">
    <location>
        <begin position="1"/>
        <end position="343"/>
    </location>
</feature>
<feature type="transmembrane region" description="Helical" evidence="1">
    <location>
        <begin position="22"/>
        <end position="42"/>
    </location>
</feature>
<feature type="transmembrane region" description="Helical" evidence="1">
    <location>
        <begin position="54"/>
        <end position="74"/>
    </location>
</feature>
<feature type="transmembrane region" description="Helical" evidence="1">
    <location>
        <begin position="97"/>
        <end position="117"/>
    </location>
</feature>
<feature type="transmembrane region" description="Helical" evidence="1">
    <location>
        <begin position="123"/>
        <end position="143"/>
    </location>
</feature>
<feature type="transmembrane region" description="Helical" evidence="1">
    <location>
        <begin position="193"/>
        <end position="213"/>
    </location>
</feature>
<feature type="transmembrane region" description="Helical" evidence="1">
    <location>
        <begin position="257"/>
        <end position="277"/>
    </location>
</feature>
<feature type="region of interest" description="Disordered" evidence="2">
    <location>
        <begin position="283"/>
        <end position="343"/>
    </location>
</feature>
<feature type="compositionally biased region" description="Acidic residues" evidence="2">
    <location>
        <begin position="295"/>
        <end position="325"/>
    </location>
</feature>
<feature type="binding site" evidence="1">
    <location>
        <position position="145"/>
    </location>
    <ligand>
        <name>a 1,2-diacyl-sn-glycero-3-phospho-(1'-sn-glycerol)</name>
        <dbReference type="ChEBI" id="CHEBI:64716"/>
    </ligand>
</feature>
<accession>B1MBV1</accession>
<sequence length="343" mass="36580">MTVVNLAYIPSPPQGVWHLGPIPIRAYALCIIAGIVAALIIGDRRWEQRGGERGVIYDIALWAVPFGLVGGRLYHVMTDWQTYFGAHGKGIGKAIAVWEGGLGIWGAVALGGVGAWIACRRRGIPLPAFADAIAPGIVLAQAIGRLGNYFNQELTGGPTTLPWGLELFYRRSADGTVDVLNLNGVSTGEVAQVVHPTFLYELLWNVLVFVLLIVVDRRFKIGHGRLFAMYVAAYCVGRFCVELMRVDPATQFGGIRVNSFTSTLVFVGAVAYILLAPKGREDPATLGGTPSSADGGDDTAETEATADTEDTEDTEDGVTDAPEADATDKSVDESADNSGIVEK</sequence>
<comment type="function">
    <text evidence="1">Catalyzes the transfer of the diacylglyceryl group from phosphatidylglycerol to the sulfhydryl group of the N-terminal cysteine of a prolipoprotein, the first step in the formation of mature lipoproteins.</text>
</comment>
<comment type="catalytic activity">
    <reaction evidence="1">
        <text>L-cysteinyl-[prolipoprotein] + a 1,2-diacyl-sn-glycero-3-phospho-(1'-sn-glycerol) = an S-1,2-diacyl-sn-glyceryl-L-cysteinyl-[prolipoprotein] + sn-glycerol 1-phosphate + H(+)</text>
        <dbReference type="Rhea" id="RHEA:56712"/>
        <dbReference type="Rhea" id="RHEA-COMP:14679"/>
        <dbReference type="Rhea" id="RHEA-COMP:14680"/>
        <dbReference type="ChEBI" id="CHEBI:15378"/>
        <dbReference type="ChEBI" id="CHEBI:29950"/>
        <dbReference type="ChEBI" id="CHEBI:57685"/>
        <dbReference type="ChEBI" id="CHEBI:64716"/>
        <dbReference type="ChEBI" id="CHEBI:140658"/>
        <dbReference type="EC" id="2.5.1.145"/>
    </reaction>
</comment>
<comment type="pathway">
    <text evidence="1">Protein modification; lipoprotein biosynthesis (diacylglyceryl transfer).</text>
</comment>
<comment type="subcellular location">
    <subcellularLocation>
        <location evidence="1">Cell membrane</location>
        <topology evidence="1">Multi-pass membrane protein</topology>
    </subcellularLocation>
</comment>
<comment type="similarity">
    <text evidence="1">Belongs to the Lgt family.</text>
</comment>
<keyword id="KW-1003">Cell membrane</keyword>
<keyword id="KW-0472">Membrane</keyword>
<keyword id="KW-1185">Reference proteome</keyword>
<keyword id="KW-0808">Transferase</keyword>
<keyword id="KW-0812">Transmembrane</keyword>
<keyword id="KW-1133">Transmembrane helix</keyword>
<evidence type="ECO:0000255" key="1">
    <source>
        <dbReference type="HAMAP-Rule" id="MF_01147"/>
    </source>
</evidence>
<evidence type="ECO:0000256" key="2">
    <source>
        <dbReference type="SAM" id="MobiDB-lite"/>
    </source>
</evidence>
<proteinExistence type="inferred from homology"/>
<reference key="1">
    <citation type="journal article" date="2009" name="PLoS ONE">
        <title>Non mycobacterial virulence genes in the genome of the emerging pathogen Mycobacterium abscessus.</title>
        <authorList>
            <person name="Ripoll F."/>
            <person name="Pasek S."/>
            <person name="Schenowitz C."/>
            <person name="Dossat C."/>
            <person name="Barbe V."/>
            <person name="Rottman M."/>
            <person name="Macheras E."/>
            <person name="Heym B."/>
            <person name="Herrmann J.L."/>
            <person name="Daffe M."/>
            <person name="Brosch R."/>
            <person name="Risler J.L."/>
            <person name="Gaillard J.L."/>
        </authorList>
    </citation>
    <scope>NUCLEOTIDE SEQUENCE [LARGE SCALE GENOMIC DNA]</scope>
    <source>
        <strain>ATCC 19977 / DSM 44196 / CCUG 20993 / CIP 104536 / JCM 13569 / NCTC 13031 / TMC 1543 / L948</strain>
    </source>
</reference>